<reference key="1">
    <citation type="journal article" date="2006" name="Science">
        <title>Genomic islands and the ecology and evolution of Prochlorococcus.</title>
        <authorList>
            <person name="Coleman M.L."/>
            <person name="Sullivan M.B."/>
            <person name="Martiny A.C."/>
            <person name="Steglich C."/>
            <person name="Barry K."/>
            <person name="Delong E.F."/>
            <person name="Chisholm S.W."/>
        </authorList>
    </citation>
    <scope>NUCLEOTIDE SEQUENCE [LARGE SCALE GENOMIC DNA]</scope>
    <source>
        <strain>MIT 9312</strain>
    </source>
</reference>
<feature type="chain" id="PRO_0000321136" description="Aspartate carbamoyltransferase catalytic subunit">
    <location>
        <begin position="1"/>
        <end position="339"/>
    </location>
</feature>
<feature type="binding site" evidence="1">
    <location>
        <position position="60"/>
    </location>
    <ligand>
        <name>carbamoyl phosphate</name>
        <dbReference type="ChEBI" id="CHEBI:58228"/>
    </ligand>
</feature>
<feature type="binding site" evidence="1">
    <location>
        <position position="61"/>
    </location>
    <ligand>
        <name>carbamoyl phosphate</name>
        <dbReference type="ChEBI" id="CHEBI:58228"/>
    </ligand>
</feature>
<feature type="binding site" evidence="1">
    <location>
        <position position="88"/>
    </location>
    <ligand>
        <name>L-aspartate</name>
        <dbReference type="ChEBI" id="CHEBI:29991"/>
    </ligand>
</feature>
<feature type="binding site" evidence="1">
    <location>
        <position position="110"/>
    </location>
    <ligand>
        <name>carbamoyl phosphate</name>
        <dbReference type="ChEBI" id="CHEBI:58228"/>
    </ligand>
</feature>
<feature type="binding site" evidence="1">
    <location>
        <position position="143"/>
    </location>
    <ligand>
        <name>carbamoyl phosphate</name>
        <dbReference type="ChEBI" id="CHEBI:58228"/>
    </ligand>
</feature>
<feature type="binding site" evidence="1">
    <location>
        <position position="146"/>
    </location>
    <ligand>
        <name>carbamoyl phosphate</name>
        <dbReference type="ChEBI" id="CHEBI:58228"/>
    </ligand>
</feature>
<feature type="binding site" evidence="1">
    <location>
        <position position="183"/>
    </location>
    <ligand>
        <name>L-aspartate</name>
        <dbReference type="ChEBI" id="CHEBI:29991"/>
    </ligand>
</feature>
<feature type="binding site" evidence="1">
    <location>
        <position position="254"/>
    </location>
    <ligand>
        <name>L-aspartate</name>
        <dbReference type="ChEBI" id="CHEBI:29991"/>
    </ligand>
</feature>
<feature type="binding site" evidence="1">
    <location>
        <position position="295"/>
    </location>
    <ligand>
        <name>carbamoyl phosphate</name>
        <dbReference type="ChEBI" id="CHEBI:58228"/>
    </ligand>
</feature>
<feature type="binding site" evidence="1">
    <location>
        <position position="296"/>
    </location>
    <ligand>
        <name>carbamoyl phosphate</name>
        <dbReference type="ChEBI" id="CHEBI:58228"/>
    </ligand>
</feature>
<evidence type="ECO:0000255" key="1">
    <source>
        <dbReference type="HAMAP-Rule" id="MF_00001"/>
    </source>
</evidence>
<accession>Q31CU8</accession>
<gene>
    <name evidence="1" type="primary">pyrB</name>
    <name type="ordered locus">PMT9312_0235</name>
</gene>
<organism>
    <name type="scientific">Prochlorococcus marinus (strain MIT 9312)</name>
    <dbReference type="NCBI Taxonomy" id="74546"/>
    <lineage>
        <taxon>Bacteria</taxon>
        <taxon>Bacillati</taxon>
        <taxon>Cyanobacteriota</taxon>
        <taxon>Cyanophyceae</taxon>
        <taxon>Synechococcales</taxon>
        <taxon>Prochlorococcaceae</taxon>
        <taxon>Prochlorococcus</taxon>
    </lineage>
</organism>
<protein>
    <recommendedName>
        <fullName evidence="1">Aspartate carbamoyltransferase catalytic subunit</fullName>
        <ecNumber evidence="1">2.1.3.2</ecNumber>
    </recommendedName>
    <alternativeName>
        <fullName evidence="1">Aspartate transcarbamylase</fullName>
        <shortName evidence="1">ATCase</shortName>
    </alternativeName>
</protein>
<name>PYRB_PROM9</name>
<proteinExistence type="inferred from homology"/>
<comment type="function">
    <text evidence="1">Catalyzes the condensation of carbamoyl phosphate and aspartate to form carbamoyl aspartate and inorganic phosphate, the committed step in the de novo pyrimidine nucleotide biosynthesis pathway.</text>
</comment>
<comment type="catalytic activity">
    <reaction evidence="1">
        <text>carbamoyl phosphate + L-aspartate = N-carbamoyl-L-aspartate + phosphate + H(+)</text>
        <dbReference type="Rhea" id="RHEA:20013"/>
        <dbReference type="ChEBI" id="CHEBI:15378"/>
        <dbReference type="ChEBI" id="CHEBI:29991"/>
        <dbReference type="ChEBI" id="CHEBI:32814"/>
        <dbReference type="ChEBI" id="CHEBI:43474"/>
        <dbReference type="ChEBI" id="CHEBI:58228"/>
        <dbReference type="EC" id="2.1.3.2"/>
    </reaction>
</comment>
<comment type="pathway">
    <text evidence="1">Pyrimidine metabolism; UMP biosynthesis via de novo pathway; (S)-dihydroorotate from bicarbonate: step 2/3.</text>
</comment>
<comment type="subunit">
    <text evidence="1">Heterododecamer (2C3:3R2) of six catalytic PyrB chains organized as two trimers (C3), and six regulatory PyrI chains organized as three dimers (R2).</text>
</comment>
<comment type="similarity">
    <text evidence="1">Belongs to the aspartate/ornithine carbamoyltransferase superfamily. ATCase family.</text>
</comment>
<sequence length="339" mass="37524">MQTIWPHKHIHTLANFSIQDYKSVFELAHRFDVLKNAGTKKIPALQGTLVTSLFFEASTRTKNSFELAAKRLSADVQTFAPSSSSLTKGETIIDTALTYSAMGADTLVIRHSSSYITFEIAKKLDAINAKTSVLNAGDGLHSHPSQGLLDIYTLIKFFSKKSLSPDVLNSKKILIIGDVNHSRVARSNLWALSAFGADIILCGPKTLIPDEFINFLKTPAPKQKEDPVKSRGSITISRSLEESIKIADAIIVLRLQKERMMENLLSSIDSYSLDYGLTPEKLSLNSKEIPILHPGPINRGIEITSKVVDEYPNCLINNQVANGIPIRMALLYLLQKYNK</sequence>
<dbReference type="EC" id="2.1.3.2" evidence="1"/>
<dbReference type="EMBL" id="CP000111">
    <property type="protein sequence ID" value="ABB49297.1"/>
    <property type="molecule type" value="Genomic_DNA"/>
</dbReference>
<dbReference type="RefSeq" id="WP_011375801.1">
    <property type="nucleotide sequence ID" value="NC_007577.1"/>
</dbReference>
<dbReference type="SMR" id="Q31CU8"/>
<dbReference type="STRING" id="74546.PMT9312_0235"/>
<dbReference type="KEGG" id="pmi:PMT9312_0235"/>
<dbReference type="eggNOG" id="COG0540">
    <property type="taxonomic scope" value="Bacteria"/>
</dbReference>
<dbReference type="HOGENOM" id="CLU_043846_2_0_3"/>
<dbReference type="OrthoDB" id="9774690at2"/>
<dbReference type="UniPathway" id="UPA00070">
    <property type="reaction ID" value="UER00116"/>
</dbReference>
<dbReference type="Proteomes" id="UP000002715">
    <property type="component" value="Chromosome"/>
</dbReference>
<dbReference type="GO" id="GO:0005829">
    <property type="term" value="C:cytosol"/>
    <property type="evidence" value="ECO:0007669"/>
    <property type="project" value="TreeGrafter"/>
</dbReference>
<dbReference type="GO" id="GO:0016597">
    <property type="term" value="F:amino acid binding"/>
    <property type="evidence" value="ECO:0007669"/>
    <property type="project" value="InterPro"/>
</dbReference>
<dbReference type="GO" id="GO:0004070">
    <property type="term" value="F:aspartate carbamoyltransferase activity"/>
    <property type="evidence" value="ECO:0007669"/>
    <property type="project" value="UniProtKB-UniRule"/>
</dbReference>
<dbReference type="GO" id="GO:0006207">
    <property type="term" value="P:'de novo' pyrimidine nucleobase biosynthetic process"/>
    <property type="evidence" value="ECO:0007669"/>
    <property type="project" value="InterPro"/>
</dbReference>
<dbReference type="GO" id="GO:0044205">
    <property type="term" value="P:'de novo' UMP biosynthetic process"/>
    <property type="evidence" value="ECO:0007669"/>
    <property type="project" value="UniProtKB-UniRule"/>
</dbReference>
<dbReference type="GO" id="GO:0006520">
    <property type="term" value="P:amino acid metabolic process"/>
    <property type="evidence" value="ECO:0007669"/>
    <property type="project" value="InterPro"/>
</dbReference>
<dbReference type="Gene3D" id="3.40.50.1370">
    <property type="entry name" value="Aspartate/ornithine carbamoyltransferase"/>
    <property type="match status" value="2"/>
</dbReference>
<dbReference type="HAMAP" id="MF_00001">
    <property type="entry name" value="Asp_carb_tr"/>
    <property type="match status" value="1"/>
</dbReference>
<dbReference type="InterPro" id="IPR006132">
    <property type="entry name" value="Asp/Orn_carbamoyltranf_P-bd"/>
</dbReference>
<dbReference type="InterPro" id="IPR006130">
    <property type="entry name" value="Asp/Orn_carbamoylTrfase"/>
</dbReference>
<dbReference type="InterPro" id="IPR036901">
    <property type="entry name" value="Asp/Orn_carbamoylTrfase_sf"/>
</dbReference>
<dbReference type="InterPro" id="IPR002082">
    <property type="entry name" value="Asp_carbamoyltransf"/>
</dbReference>
<dbReference type="InterPro" id="IPR006131">
    <property type="entry name" value="Asp_carbamoyltransf_Asp/Orn-bd"/>
</dbReference>
<dbReference type="NCBIfam" id="TIGR00670">
    <property type="entry name" value="asp_carb_tr"/>
    <property type="match status" value="1"/>
</dbReference>
<dbReference type="NCBIfam" id="NF002032">
    <property type="entry name" value="PRK00856.1"/>
    <property type="match status" value="1"/>
</dbReference>
<dbReference type="PANTHER" id="PTHR45753:SF6">
    <property type="entry name" value="ASPARTATE CARBAMOYLTRANSFERASE"/>
    <property type="match status" value="1"/>
</dbReference>
<dbReference type="PANTHER" id="PTHR45753">
    <property type="entry name" value="ORNITHINE CARBAMOYLTRANSFERASE, MITOCHONDRIAL"/>
    <property type="match status" value="1"/>
</dbReference>
<dbReference type="Pfam" id="PF00185">
    <property type="entry name" value="OTCace"/>
    <property type="match status" value="1"/>
</dbReference>
<dbReference type="Pfam" id="PF02729">
    <property type="entry name" value="OTCace_N"/>
    <property type="match status" value="1"/>
</dbReference>
<dbReference type="PRINTS" id="PR00100">
    <property type="entry name" value="AOTCASE"/>
</dbReference>
<dbReference type="PRINTS" id="PR00101">
    <property type="entry name" value="ATCASE"/>
</dbReference>
<dbReference type="SUPFAM" id="SSF53671">
    <property type="entry name" value="Aspartate/ornithine carbamoyltransferase"/>
    <property type="match status" value="1"/>
</dbReference>
<dbReference type="PROSITE" id="PS00097">
    <property type="entry name" value="CARBAMOYLTRANSFERASE"/>
    <property type="match status" value="1"/>
</dbReference>
<keyword id="KW-0665">Pyrimidine biosynthesis</keyword>
<keyword id="KW-0808">Transferase</keyword>